<sequence length="236" mass="26686">MAKRYWNINLEEMMEAGVHFGHGTRKWNPRMAPYISAKRKGIHITNLTRTARFLSEACDLVFDAASRGKQFLIVGTKNKAADSVARAAIRARCHYVNKKWLGGMLTNWSTTETRLHKFRDLRTEQKTGRLNRLPKRDAAVLKRQLSHLQTYLGGIKYMTGLPDIVIIIDQQEEYTALRECITLGIPTISLIDTNCDPDLADISIPANDDAIASIRLILNKLVFAICEGHSSYIQNS</sequence>
<organism>
    <name type="scientific">Carica papaya</name>
    <name type="common">Papaya</name>
    <dbReference type="NCBI Taxonomy" id="3649"/>
    <lineage>
        <taxon>Eukaryota</taxon>
        <taxon>Viridiplantae</taxon>
        <taxon>Streptophyta</taxon>
        <taxon>Embryophyta</taxon>
        <taxon>Tracheophyta</taxon>
        <taxon>Spermatophyta</taxon>
        <taxon>Magnoliopsida</taxon>
        <taxon>eudicotyledons</taxon>
        <taxon>Gunneridae</taxon>
        <taxon>Pentapetalae</taxon>
        <taxon>rosids</taxon>
        <taxon>malvids</taxon>
        <taxon>Brassicales</taxon>
        <taxon>Caricaceae</taxon>
        <taxon>Carica</taxon>
    </lineage>
</organism>
<feature type="chain" id="PRO_0000352098" description="Small ribosomal subunit protein uS2c">
    <location>
        <begin position="1"/>
        <end position="236"/>
    </location>
</feature>
<evidence type="ECO:0000305" key="1"/>
<reference key="1">
    <citation type="journal article" date="2008" name="Nature">
        <title>The draft genome of the transgenic tropical fruit tree papaya (Carica papaya Linnaeus).</title>
        <authorList>
            <person name="Ming R."/>
            <person name="Hou S."/>
            <person name="Feng Y."/>
            <person name="Yu Q."/>
            <person name="Dionne-Laporte A."/>
            <person name="Saw J.H."/>
            <person name="Senin P."/>
            <person name="Wang W."/>
            <person name="Ly B.V."/>
            <person name="Lewis K.L."/>
            <person name="Salzberg S.L."/>
            <person name="Feng L."/>
            <person name="Jones M.R."/>
            <person name="Skelton R.L."/>
            <person name="Murray J.E."/>
            <person name="Chen C."/>
            <person name="Qian W."/>
            <person name="Shen J."/>
            <person name="Du P."/>
            <person name="Eustice M."/>
            <person name="Tong E."/>
            <person name="Tang H."/>
            <person name="Lyons E."/>
            <person name="Paull R.E."/>
            <person name="Michael T.P."/>
            <person name="Wall K."/>
            <person name="Rice D.W."/>
            <person name="Albert H."/>
            <person name="Wang M.L."/>
            <person name="Zhu Y.J."/>
            <person name="Schatz M."/>
            <person name="Nagarajan N."/>
            <person name="Acob R.A."/>
            <person name="Guan P."/>
            <person name="Blas A."/>
            <person name="Wai C.M."/>
            <person name="Ackerman C.M."/>
            <person name="Ren Y."/>
            <person name="Liu C."/>
            <person name="Wang J."/>
            <person name="Wang J."/>
            <person name="Na J.K."/>
            <person name="Shakirov E.V."/>
            <person name="Haas B."/>
            <person name="Thimmapuram J."/>
            <person name="Nelson D."/>
            <person name="Wang X."/>
            <person name="Bowers J.E."/>
            <person name="Gschwend A.R."/>
            <person name="Delcher A.L."/>
            <person name="Singh R."/>
            <person name="Suzuki J.Y."/>
            <person name="Tripathi S."/>
            <person name="Neupane K."/>
            <person name="Wei H."/>
            <person name="Irikura B."/>
            <person name="Paidi M."/>
            <person name="Jiang N."/>
            <person name="Zhang W."/>
            <person name="Presting G."/>
            <person name="Windsor A."/>
            <person name="Navajas-Perez R."/>
            <person name="Torres M.J."/>
            <person name="Feltus F.A."/>
            <person name="Porter B."/>
            <person name="Li Y."/>
            <person name="Burroughs A.M."/>
            <person name="Luo M.C."/>
            <person name="Liu L."/>
            <person name="Christopher D.A."/>
            <person name="Mount S.M."/>
            <person name="Moore P.H."/>
            <person name="Sugimura T."/>
            <person name="Jiang J."/>
            <person name="Schuler M.A."/>
            <person name="Friedman V."/>
            <person name="Mitchell-Olds T."/>
            <person name="Shippen D.E."/>
            <person name="dePamphilis C.W."/>
            <person name="Palmer J.D."/>
            <person name="Freeling M."/>
            <person name="Paterson A.H."/>
            <person name="Gonsalves D."/>
            <person name="Wang L."/>
            <person name="Alam M."/>
        </authorList>
    </citation>
    <scope>NUCLEOTIDE SEQUENCE [LARGE SCALE GENOMIC DNA]</scope>
    <source>
        <strain>cv. SunUp</strain>
    </source>
</reference>
<dbReference type="EMBL" id="EU431223">
    <property type="protein sequence ID" value="ABY86771.1"/>
    <property type="molecule type" value="Genomic_DNA"/>
</dbReference>
<dbReference type="RefSeq" id="YP_001671672.1">
    <property type="nucleotide sequence ID" value="NC_010323.1"/>
</dbReference>
<dbReference type="SMR" id="B1A924"/>
<dbReference type="GeneID" id="5878370"/>
<dbReference type="KEGG" id="cpap:5878370"/>
<dbReference type="OrthoDB" id="1025363at2759"/>
<dbReference type="GO" id="GO:0009507">
    <property type="term" value="C:chloroplast"/>
    <property type="evidence" value="ECO:0007669"/>
    <property type="project" value="UniProtKB-SubCell"/>
</dbReference>
<dbReference type="GO" id="GO:0005763">
    <property type="term" value="C:mitochondrial small ribosomal subunit"/>
    <property type="evidence" value="ECO:0007669"/>
    <property type="project" value="TreeGrafter"/>
</dbReference>
<dbReference type="GO" id="GO:0003735">
    <property type="term" value="F:structural constituent of ribosome"/>
    <property type="evidence" value="ECO:0007669"/>
    <property type="project" value="InterPro"/>
</dbReference>
<dbReference type="GO" id="GO:0006412">
    <property type="term" value="P:translation"/>
    <property type="evidence" value="ECO:0007669"/>
    <property type="project" value="UniProtKB-UniRule"/>
</dbReference>
<dbReference type="CDD" id="cd01425">
    <property type="entry name" value="RPS2"/>
    <property type="match status" value="1"/>
</dbReference>
<dbReference type="FunFam" id="3.40.50.10490:FF:000101">
    <property type="match status" value="1"/>
</dbReference>
<dbReference type="FunFam" id="1.10.287.610:FF:000001">
    <property type="entry name" value="30S ribosomal protein S2"/>
    <property type="match status" value="1"/>
</dbReference>
<dbReference type="Gene3D" id="3.40.50.10490">
    <property type="entry name" value="Glucose-6-phosphate isomerase like protein, domain 1"/>
    <property type="match status" value="1"/>
</dbReference>
<dbReference type="Gene3D" id="1.10.287.610">
    <property type="entry name" value="Helix hairpin bin"/>
    <property type="match status" value="1"/>
</dbReference>
<dbReference type="HAMAP" id="MF_00291_B">
    <property type="entry name" value="Ribosomal_uS2_B"/>
    <property type="match status" value="1"/>
</dbReference>
<dbReference type="InterPro" id="IPR001865">
    <property type="entry name" value="Ribosomal_uS2"/>
</dbReference>
<dbReference type="InterPro" id="IPR005706">
    <property type="entry name" value="Ribosomal_uS2_bac/mit/plastid"/>
</dbReference>
<dbReference type="InterPro" id="IPR018130">
    <property type="entry name" value="Ribosomal_uS2_CS"/>
</dbReference>
<dbReference type="InterPro" id="IPR023591">
    <property type="entry name" value="Ribosomal_uS2_flav_dom_sf"/>
</dbReference>
<dbReference type="NCBIfam" id="TIGR01011">
    <property type="entry name" value="rpsB_bact"/>
    <property type="match status" value="1"/>
</dbReference>
<dbReference type="PANTHER" id="PTHR12534">
    <property type="entry name" value="30S RIBOSOMAL PROTEIN S2 PROKARYOTIC AND ORGANELLAR"/>
    <property type="match status" value="1"/>
</dbReference>
<dbReference type="PANTHER" id="PTHR12534:SF0">
    <property type="entry name" value="SMALL RIBOSOMAL SUBUNIT PROTEIN US2M"/>
    <property type="match status" value="1"/>
</dbReference>
<dbReference type="Pfam" id="PF00318">
    <property type="entry name" value="Ribosomal_S2"/>
    <property type="match status" value="1"/>
</dbReference>
<dbReference type="PRINTS" id="PR00395">
    <property type="entry name" value="RIBOSOMALS2"/>
</dbReference>
<dbReference type="SUPFAM" id="SSF52313">
    <property type="entry name" value="Ribosomal protein S2"/>
    <property type="match status" value="1"/>
</dbReference>
<dbReference type="PROSITE" id="PS00962">
    <property type="entry name" value="RIBOSOMAL_S2_1"/>
    <property type="match status" value="1"/>
</dbReference>
<dbReference type="PROSITE" id="PS00963">
    <property type="entry name" value="RIBOSOMAL_S2_2"/>
    <property type="match status" value="1"/>
</dbReference>
<proteinExistence type="inferred from homology"/>
<protein>
    <recommendedName>
        <fullName evidence="1">Small ribosomal subunit protein uS2c</fullName>
    </recommendedName>
    <alternativeName>
        <fullName>30S ribosomal protein S2, chloroplastic</fullName>
    </alternativeName>
</protein>
<gene>
    <name type="primary">rps2</name>
</gene>
<accession>B1A924</accession>
<geneLocation type="chloroplast"/>
<comment type="subcellular location">
    <subcellularLocation>
        <location>Plastid</location>
        <location>Chloroplast</location>
    </subcellularLocation>
</comment>
<comment type="similarity">
    <text evidence="1">Belongs to the universal ribosomal protein uS2 family.</text>
</comment>
<keyword id="KW-0150">Chloroplast</keyword>
<keyword id="KW-0934">Plastid</keyword>
<keyword id="KW-0687">Ribonucleoprotein</keyword>
<keyword id="KW-0689">Ribosomal protein</keyword>
<name>RR2_CARPA</name>